<gene>
    <name type="primary">IL1A</name>
</gene>
<proteinExistence type="evidence at transcript level"/>
<organism>
    <name type="scientific">Felis catus</name>
    <name type="common">Cat</name>
    <name type="synonym">Felis silvestris catus</name>
    <dbReference type="NCBI Taxonomy" id="9685"/>
    <lineage>
        <taxon>Eukaryota</taxon>
        <taxon>Metazoa</taxon>
        <taxon>Chordata</taxon>
        <taxon>Craniata</taxon>
        <taxon>Vertebrata</taxon>
        <taxon>Euteleostomi</taxon>
        <taxon>Mammalia</taxon>
        <taxon>Eutheria</taxon>
        <taxon>Laurasiatheria</taxon>
        <taxon>Carnivora</taxon>
        <taxon>Feliformia</taxon>
        <taxon>Felidae</taxon>
        <taxon>Felinae</taxon>
        <taxon>Felis</taxon>
    </lineage>
</organism>
<comment type="function">
    <text evidence="3">Cytokine constitutively present intracellularly in nearly all resting non-hematopoietic cells that plays an important role in inflammation and bridges the innate and adaptive immune systems. After binding to its receptor IL1R1 together with its accessory protein IL1RAP, forms the high affinity interleukin-1 receptor complex. Signaling involves the recruitment of adapter molecules such as MYD88, IRAK1 or IRAK4. In turn, mediates the activation of NF-kappa-B and the three MAPK pathways p38, p42/p44 and JNK pathways. Within the cell, acts as an alarmin and cell death results in its liberation in the extracellular space after disruption of the cell membrane to induce inflammation and alert the host to injury or damage. In addition to its role as a danger signal, which occurs when the cytokine is passively released by cell necrosis, directly senses DNA damage and acts as signal for genotoxic stress without loss of cell integrity.</text>
</comment>
<comment type="subunit">
    <text evidence="3">Monomer. Interacts with TMED10; the interaction mediates the translocation from the cytoplasm into the ERGIC (endoplasmic reticulum-Golgi intermediate compartment) and thereby secretion. Interacts with IL1R1. Interacts with S100A13; this interaction is the first step in the export of IL1A, followed by direct translocation of this complex across the plasma membrane.</text>
</comment>
<comment type="subcellular location">
    <subcellularLocation>
        <location evidence="3">Nucleus</location>
    </subcellularLocation>
    <subcellularLocation>
        <location evidence="3">Cytoplasm</location>
    </subcellularLocation>
    <subcellularLocation>
        <location evidence="3">Secreted</location>
    </subcellularLocation>
    <text evidence="3">The lack of a specific hydrophobic segment in the precursor sequence suggests that IL-1 is released by damaged cells or is secreted by a mechanism differing from that used for other secretory proteins. The secretion is dependent on protein unfolding and facilitated by the cargo receptor TMED10; it results in protein translocation from the cytoplasm into the ERGIC (endoplasmic reticulum-Golgi intermediate compartment) followed by vesicle entry and secretion. Recruited to DNA damage sites and secreted after genotoxic stress.</text>
</comment>
<comment type="domain">
    <text>The similarity among the IL-1 precursors suggests that the amino ends of these proteins serve some as yet undefined function.</text>
</comment>
<comment type="PTM">
    <text evidence="3">Acetylated within its nuclear localization sequence, which impacts subcellular localization.</text>
</comment>
<comment type="PTM">
    <text evidence="3">Proteolytic processed by CAPN1 in a calcium-dependent manner. Cleavage from 31 kDa precursor to 18 kDa biologically active molecules.</text>
</comment>
<comment type="PTM">
    <text evidence="3">Phosphorylated. Phosphorylation greatly enhances susceptibility to digestion and promotes the conversion of pre-IL1A alpha to the biologically active IL1A.</text>
</comment>
<comment type="similarity">
    <text evidence="5">Belongs to the IL-1 family.</text>
</comment>
<name>IL1A_FELCA</name>
<keyword id="KW-0007">Acetylation</keyword>
<keyword id="KW-0202">Cytokine</keyword>
<keyword id="KW-0963">Cytoplasm</keyword>
<keyword id="KW-0325">Glycoprotein</keyword>
<keyword id="KW-0395">Inflammatory response</keyword>
<keyword id="KW-0497">Mitogen</keyword>
<keyword id="KW-0539">Nucleus</keyword>
<keyword id="KW-0597">Phosphoprotein</keyword>
<keyword id="KW-0666">Pyrogen</keyword>
<keyword id="KW-1185">Reference proteome</keyword>
<keyword id="KW-0964">Secreted</keyword>
<evidence type="ECO:0000250" key="1"/>
<evidence type="ECO:0000250" key="2">
    <source>
        <dbReference type="UniProtKB" id="P01582"/>
    </source>
</evidence>
<evidence type="ECO:0000250" key="3">
    <source>
        <dbReference type="UniProtKB" id="P01583"/>
    </source>
</evidence>
<evidence type="ECO:0000255" key="4"/>
<evidence type="ECO:0000305" key="5"/>
<dbReference type="EMBL" id="AF047012">
    <property type="protein sequence ID" value="AAC03067.1"/>
    <property type="molecule type" value="mRNA"/>
</dbReference>
<dbReference type="RefSeq" id="NP_001009351.1">
    <property type="nucleotide sequence ID" value="NM_001009351.1"/>
</dbReference>
<dbReference type="SMR" id="O46613"/>
<dbReference type="FunCoup" id="O46613">
    <property type="interactions" value="73"/>
</dbReference>
<dbReference type="STRING" id="9685.ENSFCAP00000007503"/>
<dbReference type="GlyCosmos" id="O46613">
    <property type="glycosylation" value="1 site, No reported glycans"/>
</dbReference>
<dbReference type="PaxDb" id="9685-ENSFCAP00000007503"/>
<dbReference type="Ensembl" id="ENSFCAT00000008097.5">
    <property type="protein sequence ID" value="ENSFCAP00000007503.5"/>
    <property type="gene ID" value="ENSFCAG00000008095.5"/>
</dbReference>
<dbReference type="GeneID" id="493944"/>
<dbReference type="KEGG" id="fca:493944"/>
<dbReference type="CTD" id="3552"/>
<dbReference type="VGNC" id="VGNC:67765">
    <property type="gene designation" value="IL1A"/>
</dbReference>
<dbReference type="eggNOG" id="ENOG502T3DD">
    <property type="taxonomic scope" value="Eukaryota"/>
</dbReference>
<dbReference type="GeneTree" id="ENSGT00390000013353"/>
<dbReference type="InParanoid" id="O46613"/>
<dbReference type="OMA" id="SNMKYNF"/>
<dbReference type="OrthoDB" id="9451248at2759"/>
<dbReference type="Proteomes" id="UP000011712">
    <property type="component" value="Chromosome A3"/>
</dbReference>
<dbReference type="Bgee" id="ENSFCAG00000008095">
    <property type="expression patterns" value="Expressed in testis and 9 other cell types or tissues"/>
</dbReference>
<dbReference type="GO" id="GO:0005829">
    <property type="term" value="C:cytosol"/>
    <property type="evidence" value="ECO:0000250"/>
    <property type="project" value="UniProtKB"/>
</dbReference>
<dbReference type="GO" id="GO:0005615">
    <property type="term" value="C:extracellular space"/>
    <property type="evidence" value="ECO:0000250"/>
    <property type="project" value="UniProtKB"/>
</dbReference>
<dbReference type="GO" id="GO:0005634">
    <property type="term" value="C:nucleus"/>
    <property type="evidence" value="ECO:0007669"/>
    <property type="project" value="UniProtKB-SubCell"/>
</dbReference>
<dbReference type="GO" id="GO:0005507">
    <property type="term" value="F:copper ion binding"/>
    <property type="evidence" value="ECO:0000250"/>
    <property type="project" value="UniProtKB"/>
</dbReference>
<dbReference type="GO" id="GO:0005125">
    <property type="term" value="F:cytokine activity"/>
    <property type="evidence" value="ECO:0000318"/>
    <property type="project" value="GO_Central"/>
</dbReference>
<dbReference type="GO" id="GO:0005149">
    <property type="term" value="F:interleukin-1 receptor binding"/>
    <property type="evidence" value="ECO:0007669"/>
    <property type="project" value="InterPro"/>
</dbReference>
<dbReference type="GO" id="GO:0034605">
    <property type="term" value="P:cellular response to heat"/>
    <property type="evidence" value="ECO:0000250"/>
    <property type="project" value="UniProtKB"/>
</dbReference>
<dbReference type="GO" id="GO:0071222">
    <property type="term" value="P:cellular response to lipopolysaccharide"/>
    <property type="evidence" value="ECO:0000318"/>
    <property type="project" value="GO_Central"/>
</dbReference>
<dbReference type="GO" id="GO:0019221">
    <property type="term" value="P:cytokine-mediated signaling pathway"/>
    <property type="evidence" value="ECO:0000318"/>
    <property type="project" value="GO_Central"/>
</dbReference>
<dbReference type="GO" id="GO:0001660">
    <property type="term" value="P:fever generation"/>
    <property type="evidence" value="ECO:0007669"/>
    <property type="project" value="UniProtKB-KW"/>
</dbReference>
<dbReference type="GO" id="GO:0006955">
    <property type="term" value="P:immune response"/>
    <property type="evidence" value="ECO:0000318"/>
    <property type="project" value="GO_Central"/>
</dbReference>
<dbReference type="GO" id="GO:0006954">
    <property type="term" value="P:inflammatory response"/>
    <property type="evidence" value="ECO:0000318"/>
    <property type="project" value="GO_Central"/>
</dbReference>
<dbReference type="GO" id="GO:0043123">
    <property type="term" value="P:positive regulation of canonical NF-kappaB signal transduction"/>
    <property type="evidence" value="ECO:0000318"/>
    <property type="project" value="GO_Central"/>
</dbReference>
<dbReference type="GO" id="GO:0051781">
    <property type="term" value="P:positive regulation of cell division"/>
    <property type="evidence" value="ECO:0007669"/>
    <property type="project" value="UniProtKB-KW"/>
</dbReference>
<dbReference type="GO" id="GO:0033092">
    <property type="term" value="P:positive regulation of immature T cell proliferation in thymus"/>
    <property type="evidence" value="ECO:0000318"/>
    <property type="project" value="GO_Central"/>
</dbReference>
<dbReference type="GO" id="GO:0070372">
    <property type="term" value="P:regulation of ERK1 and ERK2 cascade"/>
    <property type="evidence" value="ECO:0000318"/>
    <property type="project" value="GO_Central"/>
</dbReference>
<dbReference type="GO" id="GO:0046688">
    <property type="term" value="P:response to copper ion"/>
    <property type="evidence" value="ECO:0000250"/>
    <property type="project" value="UniProtKB"/>
</dbReference>
<dbReference type="CDD" id="cd23295">
    <property type="entry name" value="beta-trefoil_IL1A"/>
    <property type="match status" value="1"/>
</dbReference>
<dbReference type="FunFam" id="2.80.10.50:FF:000049">
    <property type="entry name" value="Interleukin-1 alpha"/>
    <property type="match status" value="1"/>
</dbReference>
<dbReference type="Gene3D" id="2.80.10.50">
    <property type="match status" value="1"/>
</dbReference>
<dbReference type="InterPro" id="IPR003295">
    <property type="entry name" value="IL-1_alpha"/>
</dbReference>
<dbReference type="InterPro" id="IPR020877">
    <property type="entry name" value="IL-1_CS"/>
</dbReference>
<dbReference type="InterPro" id="IPR000975">
    <property type="entry name" value="IL-1_fam"/>
</dbReference>
<dbReference type="InterPro" id="IPR003502">
    <property type="entry name" value="IL-1_propep"/>
</dbReference>
<dbReference type="InterPro" id="IPR008996">
    <property type="entry name" value="IL1/FGF"/>
</dbReference>
<dbReference type="PANTHER" id="PTHR10078:SF33">
    <property type="entry name" value="INTERLEUKIN-1 ALPHA"/>
    <property type="match status" value="1"/>
</dbReference>
<dbReference type="PANTHER" id="PTHR10078">
    <property type="entry name" value="INTERLEUKIN-1 FAMILY MEMBER"/>
    <property type="match status" value="1"/>
</dbReference>
<dbReference type="Pfam" id="PF00340">
    <property type="entry name" value="IL1"/>
    <property type="match status" value="1"/>
</dbReference>
<dbReference type="Pfam" id="PF02394">
    <property type="entry name" value="IL1_propep"/>
    <property type="match status" value="1"/>
</dbReference>
<dbReference type="PRINTS" id="PR00264">
    <property type="entry name" value="INTERLEUKIN1"/>
</dbReference>
<dbReference type="PRINTS" id="PR01358">
    <property type="entry name" value="INTRLEUKIN1A"/>
</dbReference>
<dbReference type="PRINTS" id="PR01357">
    <property type="entry name" value="INTRLEUKN1AB"/>
</dbReference>
<dbReference type="SMART" id="SM00125">
    <property type="entry name" value="IL1"/>
    <property type="match status" value="1"/>
</dbReference>
<dbReference type="SUPFAM" id="SSF50353">
    <property type="entry name" value="Cytokine"/>
    <property type="match status" value="1"/>
</dbReference>
<dbReference type="PROSITE" id="PS00253">
    <property type="entry name" value="INTERLEUKIN_1"/>
    <property type="match status" value="1"/>
</dbReference>
<feature type="propeptide" id="PRO_0000015261" evidence="1">
    <location>
        <begin position="1"/>
        <end position="112"/>
    </location>
</feature>
<feature type="chain" id="PRO_0000015262" description="Interleukin-1 alpha">
    <location>
        <begin position="113"/>
        <end position="270"/>
    </location>
</feature>
<feature type="region of interest" description="Nuclear localization signal (NLS)" evidence="3">
    <location>
        <begin position="82"/>
        <end position="86"/>
    </location>
</feature>
<feature type="modified residue" description="N6-acetyllysine" evidence="3">
    <location>
        <position position="82"/>
    </location>
</feature>
<feature type="modified residue" description="Phosphoserine" evidence="2">
    <location>
        <position position="87"/>
    </location>
</feature>
<feature type="glycosylation site" description="N-linked (GlcNAc...) asparagine" evidence="4">
    <location>
        <position position="139"/>
    </location>
</feature>
<accession>O46613</accession>
<sequence length="270" mass="30798">MAKVPDLFEDLKNCYSENEEYSSEIDHLTLNQKSFYDASYDPLHEDCTDKFMSPSTSETSKTPQLTLKKSVVMVAANGKILKKRRLSLNQFLTADDLEAIANEVEEEIMKPRSVAPNFYSSEKYNYQKIIKSQFILNDNLSQSVIRKAGGKYLAAAALQNLDDAVKFDMGAYTSKEDSKLPVTLRISKTRLFVSAQNEDEPVLLKEMPETPKTIRDETNLLFFWERHGSKNYFKSVAHPKLFIATQEEQLVHMARGLPSVTDFQILETQS</sequence>
<protein>
    <recommendedName>
        <fullName>Interleukin-1 alpha</fullName>
        <shortName>IL-1 alpha</shortName>
    </recommendedName>
</protein>
<reference key="1">
    <citation type="journal article" date="1999" name="Gene">
        <title>Identification of two transcripts of canine, feline, and porcine interleukin-1 alpha.</title>
        <authorList>
            <person name="Straubinger A.F."/>
            <person name="Viveiros M.M."/>
            <person name="Straubinger R.K."/>
        </authorList>
    </citation>
    <scope>NUCLEOTIDE SEQUENCE [MRNA]</scope>
</reference>